<dbReference type="EC" id="5.4.2.12" evidence="1"/>
<dbReference type="EMBL" id="CP000153">
    <property type="protein sequence ID" value="ABB44891.1"/>
    <property type="molecule type" value="Genomic_DNA"/>
</dbReference>
<dbReference type="RefSeq" id="WP_011373232.1">
    <property type="nucleotide sequence ID" value="NC_007575.1"/>
</dbReference>
<dbReference type="SMR" id="Q30Q40"/>
<dbReference type="STRING" id="326298.Suden_1614"/>
<dbReference type="KEGG" id="tdn:Suden_1614"/>
<dbReference type="eggNOG" id="COG0696">
    <property type="taxonomic scope" value="Bacteria"/>
</dbReference>
<dbReference type="HOGENOM" id="CLU_026099_2_0_7"/>
<dbReference type="OrthoDB" id="9800863at2"/>
<dbReference type="UniPathway" id="UPA00109">
    <property type="reaction ID" value="UER00186"/>
</dbReference>
<dbReference type="Proteomes" id="UP000002714">
    <property type="component" value="Chromosome"/>
</dbReference>
<dbReference type="GO" id="GO:0005829">
    <property type="term" value="C:cytosol"/>
    <property type="evidence" value="ECO:0007669"/>
    <property type="project" value="TreeGrafter"/>
</dbReference>
<dbReference type="GO" id="GO:0030145">
    <property type="term" value="F:manganese ion binding"/>
    <property type="evidence" value="ECO:0007669"/>
    <property type="project" value="UniProtKB-UniRule"/>
</dbReference>
<dbReference type="GO" id="GO:0004619">
    <property type="term" value="F:phosphoglycerate mutase activity"/>
    <property type="evidence" value="ECO:0007669"/>
    <property type="project" value="UniProtKB-EC"/>
</dbReference>
<dbReference type="GO" id="GO:0006007">
    <property type="term" value="P:glucose catabolic process"/>
    <property type="evidence" value="ECO:0007669"/>
    <property type="project" value="InterPro"/>
</dbReference>
<dbReference type="GO" id="GO:0006096">
    <property type="term" value="P:glycolytic process"/>
    <property type="evidence" value="ECO:0007669"/>
    <property type="project" value="UniProtKB-UniRule"/>
</dbReference>
<dbReference type="CDD" id="cd16010">
    <property type="entry name" value="iPGM"/>
    <property type="match status" value="1"/>
</dbReference>
<dbReference type="FunFam" id="3.40.1450.10:FF:000002">
    <property type="entry name" value="2,3-bisphosphoglycerate-independent phosphoglycerate mutase"/>
    <property type="match status" value="1"/>
</dbReference>
<dbReference type="Gene3D" id="3.40.720.10">
    <property type="entry name" value="Alkaline Phosphatase, subunit A"/>
    <property type="match status" value="1"/>
</dbReference>
<dbReference type="Gene3D" id="3.40.1450.10">
    <property type="entry name" value="BPG-independent phosphoglycerate mutase, domain B"/>
    <property type="match status" value="1"/>
</dbReference>
<dbReference type="HAMAP" id="MF_01038">
    <property type="entry name" value="GpmI"/>
    <property type="match status" value="1"/>
</dbReference>
<dbReference type="InterPro" id="IPR017850">
    <property type="entry name" value="Alkaline_phosphatase_core_sf"/>
</dbReference>
<dbReference type="InterPro" id="IPR011258">
    <property type="entry name" value="BPG-indep_PGM_N"/>
</dbReference>
<dbReference type="InterPro" id="IPR006124">
    <property type="entry name" value="Metalloenzyme"/>
</dbReference>
<dbReference type="InterPro" id="IPR036646">
    <property type="entry name" value="PGAM_B_sf"/>
</dbReference>
<dbReference type="InterPro" id="IPR005995">
    <property type="entry name" value="Pgm_bpd_ind"/>
</dbReference>
<dbReference type="NCBIfam" id="TIGR01307">
    <property type="entry name" value="pgm_bpd_ind"/>
    <property type="match status" value="1"/>
</dbReference>
<dbReference type="PANTHER" id="PTHR31637">
    <property type="entry name" value="2,3-BISPHOSPHOGLYCERATE-INDEPENDENT PHOSPHOGLYCERATE MUTASE"/>
    <property type="match status" value="1"/>
</dbReference>
<dbReference type="PANTHER" id="PTHR31637:SF0">
    <property type="entry name" value="2,3-BISPHOSPHOGLYCERATE-INDEPENDENT PHOSPHOGLYCERATE MUTASE"/>
    <property type="match status" value="1"/>
</dbReference>
<dbReference type="Pfam" id="PF06415">
    <property type="entry name" value="iPGM_N"/>
    <property type="match status" value="1"/>
</dbReference>
<dbReference type="Pfam" id="PF01676">
    <property type="entry name" value="Metalloenzyme"/>
    <property type="match status" value="1"/>
</dbReference>
<dbReference type="PIRSF" id="PIRSF001492">
    <property type="entry name" value="IPGAM"/>
    <property type="match status" value="1"/>
</dbReference>
<dbReference type="SUPFAM" id="SSF64158">
    <property type="entry name" value="2,3-Bisphosphoglycerate-independent phosphoglycerate mutase, substrate-binding domain"/>
    <property type="match status" value="1"/>
</dbReference>
<dbReference type="SUPFAM" id="SSF53649">
    <property type="entry name" value="Alkaline phosphatase-like"/>
    <property type="match status" value="1"/>
</dbReference>
<evidence type="ECO:0000255" key="1">
    <source>
        <dbReference type="HAMAP-Rule" id="MF_01038"/>
    </source>
</evidence>
<proteinExistence type="inferred from homology"/>
<name>GPMI_SULDN</name>
<comment type="function">
    <text evidence="1">Catalyzes the interconversion of 2-phosphoglycerate and 3-phosphoglycerate.</text>
</comment>
<comment type="catalytic activity">
    <reaction evidence="1">
        <text>(2R)-2-phosphoglycerate = (2R)-3-phosphoglycerate</text>
        <dbReference type="Rhea" id="RHEA:15901"/>
        <dbReference type="ChEBI" id="CHEBI:58272"/>
        <dbReference type="ChEBI" id="CHEBI:58289"/>
        <dbReference type="EC" id="5.4.2.12"/>
    </reaction>
</comment>
<comment type="cofactor">
    <cofactor evidence="1">
        <name>Mn(2+)</name>
        <dbReference type="ChEBI" id="CHEBI:29035"/>
    </cofactor>
    <text evidence="1">Binds 2 manganese ions per subunit.</text>
</comment>
<comment type="pathway">
    <text evidence="1">Carbohydrate degradation; glycolysis; pyruvate from D-glyceraldehyde 3-phosphate: step 3/5.</text>
</comment>
<comment type="subunit">
    <text evidence="1">Monomer.</text>
</comment>
<comment type="similarity">
    <text evidence="1">Belongs to the BPG-independent phosphoglycerate mutase family.</text>
</comment>
<sequence length="491" mass="54582">MAKKAILVITDGIGYSSGMEYNAFYNAQKPTYDKLFSNTPHSFIETHGLSVGLPEGQMGNSEVGHMSMGSGRVLYQDLVKISLSLSENRFRDNEAFRELLAKSSRLHLIGLMSDGGVHSHIDHFMGIADIAAKEGKEVFLHLITDGRDVSPTSAKKYLAQVEKHLGANIKIATVSGRFYSMDRDNRWERVQKGYEAIVKAEPKTTLNPSEYIDASYAKNETDEFIEPIAFDGYDGMSDNDSVLMINFRSDRMREITTAIGESNFSSFEKSDIKLHVATITEYDKNFSYPVLFKKDSPKNTLSEVISSAGLRQLHTAETEKYAHVTFFFNGGIDEPYENETRVLIPSPNVRTYDEKPQMSAKEVGEVVLKGMDEAYDFIVVNFANGDMVGHTGNLEAAKIAVNTVDSELGKILQKAKEMDYSVLITSDHGNCEEMRDDDGNILTNHTAGKVWCFVEAEGVSRVEDGGLNNIAPTILKLMGLEIPKEMDHSLV</sequence>
<reference key="1">
    <citation type="journal article" date="2008" name="Appl. Environ. Microbiol.">
        <title>Genome of the epsilonproteobacterial chemolithoautotroph Sulfurimonas denitrificans.</title>
        <authorList>
            <person name="Sievert S.M."/>
            <person name="Scott K.M."/>
            <person name="Klotz M.G."/>
            <person name="Chain P.S.G."/>
            <person name="Hauser L.J."/>
            <person name="Hemp J."/>
            <person name="Huegler M."/>
            <person name="Land M."/>
            <person name="Lapidus A."/>
            <person name="Larimer F.W."/>
            <person name="Lucas S."/>
            <person name="Malfatti S.A."/>
            <person name="Meyer F."/>
            <person name="Paulsen I.T."/>
            <person name="Ren Q."/>
            <person name="Simon J."/>
            <person name="Bailey K."/>
            <person name="Diaz E."/>
            <person name="Fitzpatrick K.A."/>
            <person name="Glover B."/>
            <person name="Gwatney N."/>
            <person name="Korajkic A."/>
            <person name="Long A."/>
            <person name="Mobberley J.M."/>
            <person name="Pantry S.N."/>
            <person name="Pazder G."/>
            <person name="Peterson S."/>
            <person name="Quintanilla J.D."/>
            <person name="Sprinkle R."/>
            <person name="Stephens J."/>
            <person name="Thomas P."/>
            <person name="Vaughn R."/>
            <person name="Weber M.J."/>
            <person name="Wooten L.L."/>
        </authorList>
    </citation>
    <scope>NUCLEOTIDE SEQUENCE [LARGE SCALE GENOMIC DNA]</scope>
    <source>
        <strain>ATCC 33889 / DSM 1251</strain>
    </source>
</reference>
<protein>
    <recommendedName>
        <fullName evidence="1">2,3-bisphosphoglycerate-independent phosphoglycerate mutase</fullName>
        <shortName evidence="1">BPG-independent PGAM</shortName>
        <shortName evidence="1">Phosphoglyceromutase</shortName>
        <shortName evidence="1">iPGM</shortName>
        <ecNumber evidence="1">5.4.2.12</ecNumber>
    </recommendedName>
</protein>
<organism>
    <name type="scientific">Sulfurimonas denitrificans (strain ATCC 33889 / DSM 1251)</name>
    <name type="common">Thiomicrospira denitrificans (strain ATCC 33889 / DSM 1251)</name>
    <dbReference type="NCBI Taxonomy" id="326298"/>
    <lineage>
        <taxon>Bacteria</taxon>
        <taxon>Pseudomonadati</taxon>
        <taxon>Campylobacterota</taxon>
        <taxon>Epsilonproteobacteria</taxon>
        <taxon>Campylobacterales</taxon>
        <taxon>Sulfurimonadaceae</taxon>
        <taxon>Sulfurimonas</taxon>
    </lineage>
</organism>
<keyword id="KW-0324">Glycolysis</keyword>
<keyword id="KW-0413">Isomerase</keyword>
<keyword id="KW-0464">Manganese</keyword>
<keyword id="KW-0479">Metal-binding</keyword>
<keyword id="KW-1185">Reference proteome</keyword>
<accession>Q30Q40</accession>
<feature type="chain" id="PRO_1000072982" description="2,3-bisphosphoglycerate-independent phosphoglycerate mutase">
    <location>
        <begin position="1"/>
        <end position="491"/>
    </location>
</feature>
<feature type="active site" description="Phosphoserine intermediate" evidence="1">
    <location>
        <position position="61"/>
    </location>
</feature>
<feature type="binding site" evidence="1">
    <location>
        <position position="11"/>
    </location>
    <ligand>
        <name>Mn(2+)</name>
        <dbReference type="ChEBI" id="CHEBI:29035"/>
        <label>2</label>
    </ligand>
</feature>
<feature type="binding site" evidence="1">
    <location>
        <position position="61"/>
    </location>
    <ligand>
        <name>Mn(2+)</name>
        <dbReference type="ChEBI" id="CHEBI:29035"/>
        <label>2</label>
    </ligand>
</feature>
<feature type="binding site" evidence="1">
    <location>
        <position position="118"/>
    </location>
    <ligand>
        <name>substrate</name>
    </ligand>
</feature>
<feature type="binding site" evidence="1">
    <location>
        <begin position="147"/>
        <end position="148"/>
    </location>
    <ligand>
        <name>substrate</name>
    </ligand>
</feature>
<feature type="binding site" evidence="1">
    <location>
        <position position="177"/>
    </location>
    <ligand>
        <name>substrate</name>
    </ligand>
</feature>
<feature type="binding site" evidence="1">
    <location>
        <position position="183"/>
    </location>
    <ligand>
        <name>substrate</name>
    </ligand>
</feature>
<feature type="binding site" evidence="1">
    <location>
        <begin position="248"/>
        <end position="251"/>
    </location>
    <ligand>
        <name>substrate</name>
    </ligand>
</feature>
<feature type="binding site" evidence="1">
    <location>
        <position position="320"/>
    </location>
    <ligand>
        <name>substrate</name>
    </ligand>
</feature>
<feature type="binding site" evidence="1">
    <location>
        <position position="386"/>
    </location>
    <ligand>
        <name>Mn(2+)</name>
        <dbReference type="ChEBI" id="CHEBI:29035"/>
        <label>1</label>
    </ligand>
</feature>
<feature type="binding site" evidence="1">
    <location>
        <position position="390"/>
    </location>
    <ligand>
        <name>Mn(2+)</name>
        <dbReference type="ChEBI" id="CHEBI:29035"/>
        <label>1</label>
    </ligand>
</feature>
<feature type="binding site" evidence="1">
    <location>
        <position position="427"/>
    </location>
    <ligand>
        <name>Mn(2+)</name>
        <dbReference type="ChEBI" id="CHEBI:29035"/>
        <label>2</label>
    </ligand>
</feature>
<feature type="binding site" evidence="1">
    <location>
        <position position="428"/>
    </location>
    <ligand>
        <name>Mn(2+)</name>
        <dbReference type="ChEBI" id="CHEBI:29035"/>
        <label>2</label>
    </ligand>
</feature>
<feature type="binding site" evidence="1">
    <location>
        <position position="445"/>
    </location>
    <ligand>
        <name>Mn(2+)</name>
        <dbReference type="ChEBI" id="CHEBI:29035"/>
        <label>1</label>
    </ligand>
</feature>
<gene>
    <name evidence="1" type="primary">gpmI</name>
    <name type="ordered locus">Suden_1614</name>
</gene>